<name>PSAE_GLOVI</name>
<evidence type="ECO:0000255" key="1">
    <source>
        <dbReference type="HAMAP-Rule" id="MF_00613"/>
    </source>
</evidence>
<accession>Q7NFW6</accession>
<proteinExistence type="evidence at protein level"/>
<feature type="chain" id="PRO_0000204402" description="Photosystem I reaction center subunit IV">
    <location>
        <begin position="1"/>
        <end position="65"/>
    </location>
</feature>
<organism>
    <name type="scientific">Gloeobacter violaceus (strain ATCC 29082 / PCC 7421)</name>
    <dbReference type="NCBI Taxonomy" id="251221"/>
    <lineage>
        <taxon>Bacteria</taxon>
        <taxon>Bacillati</taxon>
        <taxon>Cyanobacteriota</taxon>
        <taxon>Cyanophyceae</taxon>
        <taxon>Gloeobacterales</taxon>
        <taxon>Gloeobacteraceae</taxon>
        <taxon>Gloeobacter</taxon>
    </lineage>
</organism>
<dbReference type="EMBL" id="BA000045">
    <property type="protein sequence ID" value="BAC91349.1"/>
    <property type="molecule type" value="Genomic_DNA"/>
</dbReference>
<dbReference type="RefSeq" id="NP_926354.1">
    <property type="nucleotide sequence ID" value="NC_005125.1"/>
</dbReference>
<dbReference type="RefSeq" id="WP_011143397.1">
    <property type="nucleotide sequence ID" value="NC_005125.1"/>
</dbReference>
<dbReference type="PDB" id="7F4V">
    <property type="method" value="EM"/>
    <property type="resolution" value="2.04 A"/>
    <property type="chains" value="aE/bE/cE=1-65"/>
</dbReference>
<dbReference type="PDBsum" id="7F4V"/>
<dbReference type="EMDB" id="EMD-31455"/>
<dbReference type="SMR" id="Q7NFW6"/>
<dbReference type="STRING" id="251221.gene:10760920"/>
<dbReference type="EnsemblBacteria" id="BAC91349">
    <property type="protein sequence ID" value="BAC91349"/>
    <property type="gene ID" value="BAC91349"/>
</dbReference>
<dbReference type="KEGG" id="gvi:gsl3408"/>
<dbReference type="PATRIC" id="fig|251221.4.peg.3444"/>
<dbReference type="eggNOG" id="ENOG503313D">
    <property type="taxonomic scope" value="Bacteria"/>
</dbReference>
<dbReference type="HOGENOM" id="CLU_136462_2_1_3"/>
<dbReference type="InParanoid" id="Q7NFW6"/>
<dbReference type="OrthoDB" id="427926at2"/>
<dbReference type="PhylomeDB" id="Q7NFW6"/>
<dbReference type="Proteomes" id="UP000000557">
    <property type="component" value="Chromosome"/>
</dbReference>
<dbReference type="GO" id="GO:0009538">
    <property type="term" value="C:photosystem I reaction center"/>
    <property type="evidence" value="ECO:0007669"/>
    <property type="project" value="InterPro"/>
</dbReference>
<dbReference type="GO" id="GO:0005886">
    <property type="term" value="C:plasma membrane"/>
    <property type="evidence" value="ECO:0007669"/>
    <property type="project" value="UniProtKB-SubCell"/>
</dbReference>
<dbReference type="GO" id="GO:0015979">
    <property type="term" value="P:photosynthesis"/>
    <property type="evidence" value="ECO:0007669"/>
    <property type="project" value="UniProtKB-UniRule"/>
</dbReference>
<dbReference type="Gene3D" id="2.30.30.50">
    <property type="match status" value="1"/>
</dbReference>
<dbReference type="HAMAP" id="MF_00613">
    <property type="entry name" value="PSI_PsaE"/>
    <property type="match status" value="1"/>
</dbReference>
<dbReference type="InterPro" id="IPR008990">
    <property type="entry name" value="Elect_transpt_acc-like_dom_sf"/>
</dbReference>
<dbReference type="InterPro" id="IPR003375">
    <property type="entry name" value="PSI_PsaE"/>
</dbReference>
<dbReference type="NCBIfam" id="NF002745">
    <property type="entry name" value="PRK02749.1"/>
    <property type="match status" value="1"/>
</dbReference>
<dbReference type="PANTHER" id="PTHR34549">
    <property type="entry name" value="PHOTOSYSTEM I REACTION CENTER SUBUNIT IV A, CHLOROPLASTIC-RELATED"/>
    <property type="match status" value="1"/>
</dbReference>
<dbReference type="PANTHER" id="PTHR34549:SF2">
    <property type="entry name" value="PHOTOSYSTEM I SUBUNIT IV"/>
    <property type="match status" value="1"/>
</dbReference>
<dbReference type="Pfam" id="PF02427">
    <property type="entry name" value="PSI_PsaE"/>
    <property type="match status" value="1"/>
</dbReference>
<dbReference type="SUPFAM" id="SSF50090">
    <property type="entry name" value="Electron transport accessory proteins"/>
    <property type="match status" value="1"/>
</dbReference>
<comment type="function">
    <text evidence="1">Stabilizes the interaction between PsaC and the PSI core, assists the docking of the ferredoxin to PSI and interacts with ferredoxin-NADP oxidoreductase.</text>
</comment>
<comment type="subunit">
    <text>The G.violaceus PSI reaction center is composed of one copy each of PsaA,B,C,D,E,F,L,M and Z, and forms trimeric complexes.</text>
</comment>
<comment type="subcellular location">
    <subcellularLocation>
        <location>Cell inner membrane</location>
        <topology>Peripheral membrane protein</topology>
        <orientation>Cytoplasmic side</orientation>
    </subcellularLocation>
</comment>
<comment type="similarity">
    <text evidence="1">Belongs to the PsaE family.</text>
</comment>
<keyword id="KW-0002">3D-structure</keyword>
<keyword id="KW-0997">Cell inner membrane</keyword>
<keyword id="KW-1003">Cell membrane</keyword>
<keyword id="KW-0472">Membrane</keyword>
<keyword id="KW-0602">Photosynthesis</keyword>
<keyword id="KW-0603">Photosystem I</keyword>
<keyword id="KW-1185">Reference proteome</keyword>
<reference key="1">
    <citation type="journal article" date="2003" name="DNA Res.">
        <title>Complete genome structure of Gloeobacter violaceus PCC 7421, a cyanobacterium that lacks thylakoids.</title>
        <authorList>
            <person name="Nakamura Y."/>
            <person name="Kaneko T."/>
            <person name="Sato S."/>
            <person name="Mimuro M."/>
            <person name="Miyashita H."/>
            <person name="Tsuchiya T."/>
            <person name="Sasamoto S."/>
            <person name="Watanabe A."/>
            <person name="Kawashima K."/>
            <person name="Kishida Y."/>
            <person name="Kiyokawa C."/>
            <person name="Kohara M."/>
            <person name="Matsumoto M."/>
            <person name="Matsuno A."/>
            <person name="Nakazaki N."/>
            <person name="Shimpo S."/>
            <person name="Takeuchi C."/>
            <person name="Yamada M."/>
            <person name="Tabata S."/>
        </authorList>
    </citation>
    <scope>NUCLEOTIDE SEQUENCE [LARGE SCALE GENOMIC DNA]</scope>
    <source>
        <strain>ATCC 29082 / PCC 7421</strain>
    </source>
</reference>
<reference key="2">
    <citation type="journal article" date="2004" name="FEBS Lett.">
        <title>Unique constitution of photosystem I with a novel subunit in the cyanobacterium Gloeobacter violaceus PCC 7421.</title>
        <authorList>
            <person name="Inoue H."/>
            <person name="Tsuchiya T."/>
            <person name="Satoh S."/>
            <person name="Miyashita H."/>
            <person name="Kaneko T."/>
            <person name="Tabata S."/>
            <person name="Tanaka A."/>
            <person name="Mimuro M."/>
        </authorList>
    </citation>
    <scope>IDENTIFICATION BY MASS SPECTROMETRY</scope>
    <scope>CHARACTERIZATION OF PHOTOSYSTEM I</scope>
    <source>
        <strain>ATCC 29082 / PCC 7421</strain>
    </source>
</reference>
<sequence>MAIERGAKVRILRKESYWYREVGTVASVDKSEKTIYPVTVRFEKVNYSGINTNNFGVSELEEVEA</sequence>
<protein>
    <recommendedName>
        <fullName evidence="1">Photosystem I reaction center subunit IV</fullName>
    </recommendedName>
</protein>
<gene>
    <name evidence="1" type="primary">psaE</name>
    <name type="ordered locus">gsl3408</name>
</gene>